<organism>
    <name type="scientific">Citrobacter koseri (strain ATCC BAA-895 / CDC 4225-83 / SGSC4696)</name>
    <dbReference type="NCBI Taxonomy" id="290338"/>
    <lineage>
        <taxon>Bacteria</taxon>
        <taxon>Pseudomonadati</taxon>
        <taxon>Pseudomonadota</taxon>
        <taxon>Gammaproteobacteria</taxon>
        <taxon>Enterobacterales</taxon>
        <taxon>Enterobacteriaceae</taxon>
        <taxon>Citrobacter</taxon>
    </lineage>
</organism>
<gene>
    <name evidence="1" type="primary">rpmJ</name>
    <name type="ordered locus">CKO_02695</name>
</gene>
<protein>
    <recommendedName>
        <fullName evidence="1">Large ribosomal subunit protein bL36</fullName>
    </recommendedName>
    <alternativeName>
        <fullName evidence="2">50S ribosomal protein L36</fullName>
    </alternativeName>
</protein>
<feature type="chain" id="PRO_0000344657" description="Large ribosomal subunit protein bL36">
    <location>
        <begin position="1"/>
        <end position="46"/>
    </location>
</feature>
<evidence type="ECO:0000255" key="1">
    <source>
        <dbReference type="HAMAP-Rule" id="MF_00251"/>
    </source>
</evidence>
<evidence type="ECO:0000305" key="2"/>
<comment type="similarity">
    <text evidence="1">Belongs to the bacterial ribosomal protein bL36 family.</text>
</comment>
<comment type="sequence caution" evidence="2">
    <conflict type="erroneous initiation">
        <sequence resource="EMBL-CDS" id="ABV13802"/>
    </conflict>
</comment>
<proteinExistence type="inferred from homology"/>
<reference key="1">
    <citation type="submission" date="2007-08" db="EMBL/GenBank/DDBJ databases">
        <authorList>
            <consortium name="The Citrobacter koseri Genome Sequencing Project"/>
            <person name="McClelland M."/>
            <person name="Sanderson E.K."/>
            <person name="Porwollik S."/>
            <person name="Spieth J."/>
            <person name="Clifton W.S."/>
            <person name="Latreille P."/>
            <person name="Courtney L."/>
            <person name="Wang C."/>
            <person name="Pepin K."/>
            <person name="Bhonagiri V."/>
            <person name="Nash W."/>
            <person name="Johnson M."/>
            <person name="Thiruvilangam P."/>
            <person name="Wilson R."/>
        </authorList>
    </citation>
    <scope>NUCLEOTIDE SEQUENCE [LARGE SCALE GENOMIC DNA]</scope>
    <source>
        <strain>ATCC BAA-895 / CDC 4225-83 / SGSC4696</strain>
    </source>
</reference>
<name>RL36_CITK8</name>
<accession>A8AJY9</accession>
<sequence length="46" mass="5480">MQVLNSLRSAKQRHPDCQIVKRKGRLYVICKSNPRFKAVQGRKKRR</sequence>
<dbReference type="EMBL" id="CP000822">
    <property type="protein sequence ID" value="ABV13802.1"/>
    <property type="status" value="ALT_INIT"/>
    <property type="molecule type" value="Genomic_DNA"/>
</dbReference>
<dbReference type="SMR" id="A8AJY9"/>
<dbReference type="STRING" id="290338.CKO_02695"/>
<dbReference type="KEGG" id="cko:CKO_02695"/>
<dbReference type="HOGENOM" id="CLU_135723_3_1_6"/>
<dbReference type="OrthoDB" id="9801558at2"/>
<dbReference type="Proteomes" id="UP000008148">
    <property type="component" value="Chromosome"/>
</dbReference>
<dbReference type="GO" id="GO:1990904">
    <property type="term" value="C:ribonucleoprotein complex"/>
    <property type="evidence" value="ECO:0007669"/>
    <property type="project" value="UniProtKB-KW"/>
</dbReference>
<dbReference type="GO" id="GO:0005840">
    <property type="term" value="C:ribosome"/>
    <property type="evidence" value="ECO:0007669"/>
    <property type="project" value="UniProtKB-KW"/>
</dbReference>
<dbReference type="GO" id="GO:0003735">
    <property type="term" value="F:structural constituent of ribosome"/>
    <property type="evidence" value="ECO:0007669"/>
    <property type="project" value="InterPro"/>
</dbReference>
<dbReference type="GO" id="GO:0006412">
    <property type="term" value="P:translation"/>
    <property type="evidence" value="ECO:0007669"/>
    <property type="project" value="UniProtKB-UniRule"/>
</dbReference>
<dbReference type="HAMAP" id="MF_00251">
    <property type="entry name" value="Ribosomal_bL36"/>
    <property type="match status" value="1"/>
</dbReference>
<dbReference type="InterPro" id="IPR000473">
    <property type="entry name" value="Ribosomal_bL36"/>
</dbReference>
<dbReference type="InterPro" id="IPR035977">
    <property type="entry name" value="Ribosomal_bL36_sp"/>
</dbReference>
<dbReference type="InterPro" id="IPR047621">
    <property type="entry name" value="Ribosomal_L36_bact"/>
</dbReference>
<dbReference type="NCBIfam" id="NF002021">
    <property type="entry name" value="PRK00831.1"/>
    <property type="match status" value="1"/>
</dbReference>
<dbReference type="NCBIfam" id="TIGR01022">
    <property type="entry name" value="rpmJ_bact"/>
    <property type="match status" value="1"/>
</dbReference>
<dbReference type="PANTHER" id="PTHR47781">
    <property type="entry name" value="50S RIBOSOMAL PROTEIN L36 2"/>
    <property type="match status" value="1"/>
</dbReference>
<dbReference type="PANTHER" id="PTHR47781:SF1">
    <property type="entry name" value="LARGE RIBOSOMAL SUBUNIT PROTEIN BL36B"/>
    <property type="match status" value="1"/>
</dbReference>
<dbReference type="Pfam" id="PF00444">
    <property type="entry name" value="Ribosomal_L36"/>
    <property type="match status" value="1"/>
</dbReference>
<dbReference type="SUPFAM" id="SSF57840">
    <property type="entry name" value="Ribosomal protein L36"/>
    <property type="match status" value="1"/>
</dbReference>
<dbReference type="PROSITE" id="PS00828">
    <property type="entry name" value="RIBOSOMAL_L36"/>
    <property type="match status" value="1"/>
</dbReference>
<keyword id="KW-1185">Reference proteome</keyword>
<keyword id="KW-0687">Ribonucleoprotein</keyword>
<keyword id="KW-0689">Ribosomal protein</keyword>